<reference key="1">
    <citation type="journal article" date="2008" name="BMC Genomics">
        <title>Genome sequence and rapid evolution of the rice pathogen Xanthomonas oryzae pv. oryzae PXO99A.</title>
        <authorList>
            <person name="Salzberg S.L."/>
            <person name="Sommer D.D."/>
            <person name="Schatz M.C."/>
            <person name="Phillippy A.M."/>
            <person name="Rabinowicz P.D."/>
            <person name="Tsuge S."/>
            <person name="Furutani A."/>
            <person name="Ochiai H."/>
            <person name="Delcher A.L."/>
            <person name="Kelley D."/>
            <person name="Madupu R."/>
            <person name="Puiu D."/>
            <person name="Radune D."/>
            <person name="Shumway M."/>
            <person name="Trapnell C."/>
            <person name="Aparna G."/>
            <person name="Jha G."/>
            <person name="Pandey A."/>
            <person name="Patil P.B."/>
            <person name="Ishihara H."/>
            <person name="Meyer D.F."/>
            <person name="Szurek B."/>
            <person name="Verdier V."/>
            <person name="Koebnik R."/>
            <person name="Dow J.M."/>
            <person name="Ryan R.P."/>
            <person name="Hirata H."/>
            <person name="Tsuyumu S."/>
            <person name="Won Lee S."/>
            <person name="Seo Y.-S."/>
            <person name="Sriariyanum M."/>
            <person name="Ronald P.C."/>
            <person name="Sonti R.V."/>
            <person name="Van Sluys M.-A."/>
            <person name="Leach J.E."/>
            <person name="White F.F."/>
            <person name="Bogdanove A.J."/>
        </authorList>
    </citation>
    <scope>NUCLEOTIDE SEQUENCE [LARGE SCALE GENOMIC DNA]</scope>
    <source>
        <strain>PXO99A</strain>
    </source>
</reference>
<protein>
    <recommendedName>
        <fullName evidence="1">Phosphoglycerate kinase</fullName>
        <ecNumber evidence="1">2.7.2.3</ecNumber>
    </recommendedName>
</protein>
<comment type="catalytic activity">
    <reaction evidence="1">
        <text>(2R)-3-phosphoglycerate + ATP = (2R)-3-phospho-glyceroyl phosphate + ADP</text>
        <dbReference type="Rhea" id="RHEA:14801"/>
        <dbReference type="ChEBI" id="CHEBI:30616"/>
        <dbReference type="ChEBI" id="CHEBI:57604"/>
        <dbReference type="ChEBI" id="CHEBI:58272"/>
        <dbReference type="ChEBI" id="CHEBI:456216"/>
        <dbReference type="EC" id="2.7.2.3"/>
    </reaction>
</comment>
<comment type="pathway">
    <text evidence="1">Carbohydrate degradation; glycolysis; pyruvate from D-glyceraldehyde 3-phosphate: step 2/5.</text>
</comment>
<comment type="subunit">
    <text evidence="1">Monomer.</text>
</comment>
<comment type="subcellular location">
    <subcellularLocation>
        <location evidence="1">Cytoplasm</location>
    </subcellularLocation>
</comment>
<comment type="similarity">
    <text evidence="1">Belongs to the phosphoglycerate kinase family.</text>
</comment>
<gene>
    <name evidence="1" type="primary">pgk</name>
    <name type="ordered locus">PXO_02116</name>
</gene>
<accession>B2SI21</accession>
<proteinExistence type="inferred from homology"/>
<feature type="chain" id="PRO_1000096394" description="Phosphoglycerate kinase">
    <location>
        <begin position="1"/>
        <end position="391"/>
    </location>
</feature>
<feature type="binding site" evidence="1">
    <location>
        <begin position="21"/>
        <end position="23"/>
    </location>
    <ligand>
        <name>substrate</name>
    </ligand>
</feature>
<feature type="binding site" evidence="1">
    <location>
        <position position="36"/>
    </location>
    <ligand>
        <name>substrate</name>
    </ligand>
</feature>
<feature type="binding site" evidence="1">
    <location>
        <begin position="59"/>
        <end position="62"/>
    </location>
    <ligand>
        <name>substrate</name>
    </ligand>
</feature>
<feature type="binding site" evidence="1">
    <location>
        <position position="113"/>
    </location>
    <ligand>
        <name>substrate</name>
    </ligand>
</feature>
<feature type="binding site" evidence="1">
    <location>
        <position position="146"/>
    </location>
    <ligand>
        <name>substrate</name>
    </ligand>
</feature>
<feature type="binding site" evidence="1">
    <location>
        <position position="197"/>
    </location>
    <ligand>
        <name>ATP</name>
        <dbReference type="ChEBI" id="CHEBI:30616"/>
    </ligand>
</feature>
<feature type="binding site" evidence="1">
    <location>
        <position position="319"/>
    </location>
    <ligand>
        <name>ATP</name>
        <dbReference type="ChEBI" id="CHEBI:30616"/>
    </ligand>
</feature>
<feature type="binding site" evidence="1">
    <location>
        <begin position="345"/>
        <end position="348"/>
    </location>
    <ligand>
        <name>ATP</name>
        <dbReference type="ChEBI" id="CHEBI:30616"/>
    </ligand>
</feature>
<organism>
    <name type="scientific">Xanthomonas oryzae pv. oryzae (strain PXO99A)</name>
    <dbReference type="NCBI Taxonomy" id="360094"/>
    <lineage>
        <taxon>Bacteria</taxon>
        <taxon>Pseudomonadati</taxon>
        <taxon>Pseudomonadota</taxon>
        <taxon>Gammaproteobacteria</taxon>
        <taxon>Lysobacterales</taxon>
        <taxon>Lysobacteraceae</taxon>
        <taxon>Xanthomonas</taxon>
    </lineage>
</organism>
<evidence type="ECO:0000255" key="1">
    <source>
        <dbReference type="HAMAP-Rule" id="MF_00145"/>
    </source>
</evidence>
<keyword id="KW-0067">ATP-binding</keyword>
<keyword id="KW-0963">Cytoplasm</keyword>
<keyword id="KW-0324">Glycolysis</keyword>
<keyword id="KW-0418">Kinase</keyword>
<keyword id="KW-0547">Nucleotide-binding</keyword>
<keyword id="KW-0808">Transferase</keyword>
<name>PGK_XANOP</name>
<dbReference type="EC" id="2.7.2.3" evidence="1"/>
<dbReference type="EMBL" id="CP000967">
    <property type="protein sequence ID" value="ACD60263.1"/>
    <property type="molecule type" value="Genomic_DNA"/>
</dbReference>
<dbReference type="RefSeq" id="WP_012445624.1">
    <property type="nucleotide sequence ID" value="NC_010717.2"/>
</dbReference>
<dbReference type="SMR" id="B2SI21"/>
<dbReference type="KEGG" id="xop:PXO_02116"/>
<dbReference type="eggNOG" id="COG0126">
    <property type="taxonomic scope" value="Bacteria"/>
</dbReference>
<dbReference type="HOGENOM" id="CLU_025427_0_2_6"/>
<dbReference type="UniPathway" id="UPA00109">
    <property type="reaction ID" value="UER00185"/>
</dbReference>
<dbReference type="Proteomes" id="UP000001740">
    <property type="component" value="Chromosome"/>
</dbReference>
<dbReference type="GO" id="GO:0005829">
    <property type="term" value="C:cytosol"/>
    <property type="evidence" value="ECO:0007669"/>
    <property type="project" value="TreeGrafter"/>
</dbReference>
<dbReference type="GO" id="GO:0043531">
    <property type="term" value="F:ADP binding"/>
    <property type="evidence" value="ECO:0007669"/>
    <property type="project" value="TreeGrafter"/>
</dbReference>
<dbReference type="GO" id="GO:0005524">
    <property type="term" value="F:ATP binding"/>
    <property type="evidence" value="ECO:0007669"/>
    <property type="project" value="UniProtKB-KW"/>
</dbReference>
<dbReference type="GO" id="GO:0004618">
    <property type="term" value="F:phosphoglycerate kinase activity"/>
    <property type="evidence" value="ECO:0007669"/>
    <property type="project" value="UniProtKB-UniRule"/>
</dbReference>
<dbReference type="GO" id="GO:0006094">
    <property type="term" value="P:gluconeogenesis"/>
    <property type="evidence" value="ECO:0007669"/>
    <property type="project" value="TreeGrafter"/>
</dbReference>
<dbReference type="GO" id="GO:0006096">
    <property type="term" value="P:glycolytic process"/>
    <property type="evidence" value="ECO:0007669"/>
    <property type="project" value="UniProtKB-UniRule"/>
</dbReference>
<dbReference type="FunFam" id="3.40.50.1260:FF:000001">
    <property type="entry name" value="Phosphoglycerate kinase"/>
    <property type="match status" value="1"/>
</dbReference>
<dbReference type="FunFam" id="3.40.50.1260:FF:000002">
    <property type="entry name" value="Phosphoglycerate kinase"/>
    <property type="match status" value="1"/>
</dbReference>
<dbReference type="Gene3D" id="3.40.50.1260">
    <property type="entry name" value="Phosphoglycerate kinase, N-terminal domain"/>
    <property type="match status" value="2"/>
</dbReference>
<dbReference type="HAMAP" id="MF_00145">
    <property type="entry name" value="Phosphoglyc_kinase"/>
    <property type="match status" value="1"/>
</dbReference>
<dbReference type="InterPro" id="IPR001576">
    <property type="entry name" value="Phosphoglycerate_kinase"/>
</dbReference>
<dbReference type="InterPro" id="IPR015911">
    <property type="entry name" value="Phosphoglycerate_kinase_CS"/>
</dbReference>
<dbReference type="InterPro" id="IPR015824">
    <property type="entry name" value="Phosphoglycerate_kinase_N"/>
</dbReference>
<dbReference type="InterPro" id="IPR036043">
    <property type="entry name" value="Phosphoglycerate_kinase_sf"/>
</dbReference>
<dbReference type="PANTHER" id="PTHR11406">
    <property type="entry name" value="PHOSPHOGLYCERATE KINASE"/>
    <property type="match status" value="1"/>
</dbReference>
<dbReference type="PANTHER" id="PTHR11406:SF23">
    <property type="entry name" value="PHOSPHOGLYCERATE KINASE 1, CHLOROPLASTIC-RELATED"/>
    <property type="match status" value="1"/>
</dbReference>
<dbReference type="Pfam" id="PF00162">
    <property type="entry name" value="PGK"/>
    <property type="match status" value="1"/>
</dbReference>
<dbReference type="PIRSF" id="PIRSF000724">
    <property type="entry name" value="Pgk"/>
    <property type="match status" value="1"/>
</dbReference>
<dbReference type="PRINTS" id="PR00477">
    <property type="entry name" value="PHGLYCKINASE"/>
</dbReference>
<dbReference type="SUPFAM" id="SSF53748">
    <property type="entry name" value="Phosphoglycerate kinase"/>
    <property type="match status" value="1"/>
</dbReference>
<dbReference type="PROSITE" id="PS00111">
    <property type="entry name" value="PGLYCERATE_KINASE"/>
    <property type="match status" value="1"/>
</dbReference>
<sequence>MSIVRMTDLDLSGKRVLIRQDLNVPIDNGQITSEQRITASVPTIKLALEKGAAVMVTSHLGRPKEGSWTEEDSLAPVATRLAALLGVDVPLVRDWVDGVKVAPGQVVLLENCRMNVGEGKDDQTLARKYAALCDVFVMDAFGTAHRAQASTHGVIRFAPVAAGGPLLMAELDALAKALDNPAKPLLAIVAGSKVSTKLELLSNLVDKVDQLIVGGGIANTFIAAAGHHVGKSLNEPDLIPTANQIVADAKTRGAEIPLPTDVVVAKQFLPDAEASVKALDAVDADDLILDIGPQTAQRYAELIASAGTVVWNGPVGVFEFESFSHGTETLARAIASSKAFSIAGGGDTLAAVDKYDIAKDVTYISTGGGAFLEFLEGKTLPAVAALQARGQ</sequence>